<protein>
    <recommendedName>
        <fullName evidence="1">Beta-hexosaminidase</fullName>
        <ecNumber evidence="1">3.2.1.52</ecNumber>
    </recommendedName>
    <alternativeName>
        <fullName evidence="1">Beta-N-acetylhexosaminidase</fullName>
    </alternativeName>
    <alternativeName>
        <fullName evidence="1">N-acetyl-beta-glucosaminidase</fullName>
    </alternativeName>
</protein>
<accession>Q9JVT3</accession>
<accession>A1IQD2</accession>
<gene>
    <name evidence="1" type="primary">nagZ</name>
    <name type="ordered locus">NMA0708</name>
</gene>
<name>NAGZ_NEIMA</name>
<sequence length="361" mass="39023">MTVPCIPRGPVMADIAAFRLTEEEKQRLLDPAVGGVILFRRNFQNIAQLKELTAEIKALRTPELIIAVDHEGGRVQRFIEGFTRLPAMNVLGQIWDKDGASAAETAARQIGWVLATELSACGIDLSFTPVLDLDWGNCAVIGNRSFHRNPEAVARLALALQKGLEKGGMKSCGKHFPGHGFVEGDSHLVLPEDGRSLSELEAADLAPFRIMSREGMAAVMPAHVVYPQVDTKPAGFSEIWLKQILRRDIGFKGVIFSDDLTMEGACGAGGIKERARISFEAGCDIVLVCNRPDLVDELRDDFRIPDNPALAQRWQYMANTLGSAAAQAVIQTADFQAAQAFVAGLASPQDTAGGVKVGEAF</sequence>
<comment type="function">
    <text evidence="1">Plays a role in peptidoglycan recycling by cleaving the terminal beta-1,4-linked N-acetylglucosamine (GlcNAc) from peptide-linked peptidoglycan fragments, giving rise to free GlcNAc, anhydro-N-acetylmuramic acid and anhydro-N-acetylmuramic acid-linked peptides.</text>
</comment>
<comment type="catalytic activity">
    <reaction evidence="1">
        <text>Hydrolysis of terminal non-reducing N-acetyl-D-hexosamine residues in N-acetyl-beta-D-hexosaminides.</text>
        <dbReference type="EC" id="3.2.1.52"/>
    </reaction>
</comment>
<comment type="pathway">
    <text evidence="1">Cell wall biogenesis; peptidoglycan recycling.</text>
</comment>
<comment type="subcellular location">
    <subcellularLocation>
        <location evidence="1">Cytoplasm</location>
    </subcellularLocation>
</comment>
<comment type="similarity">
    <text evidence="1">Belongs to the glycosyl hydrolase 3 family. NagZ subfamily.</text>
</comment>
<organism>
    <name type="scientific">Neisseria meningitidis serogroup A / serotype 4A (strain DSM 15465 / Z2491)</name>
    <dbReference type="NCBI Taxonomy" id="122587"/>
    <lineage>
        <taxon>Bacteria</taxon>
        <taxon>Pseudomonadati</taxon>
        <taxon>Pseudomonadota</taxon>
        <taxon>Betaproteobacteria</taxon>
        <taxon>Neisseriales</taxon>
        <taxon>Neisseriaceae</taxon>
        <taxon>Neisseria</taxon>
    </lineage>
</organism>
<dbReference type="EC" id="3.2.1.52" evidence="1"/>
<dbReference type="EMBL" id="AL157959">
    <property type="protein sequence ID" value="CAM07963.1"/>
    <property type="molecule type" value="Genomic_DNA"/>
</dbReference>
<dbReference type="PIR" id="H81913">
    <property type="entry name" value="H81913"/>
</dbReference>
<dbReference type="RefSeq" id="WP_002236746.1">
    <property type="nucleotide sequence ID" value="NC_003116.1"/>
</dbReference>
<dbReference type="SMR" id="Q9JVT3"/>
<dbReference type="CAZy" id="GH3">
    <property type="family name" value="Glycoside Hydrolase Family 3"/>
</dbReference>
<dbReference type="EnsemblBacteria" id="CAM07963">
    <property type="protein sequence ID" value="CAM07963"/>
    <property type="gene ID" value="NMA0708"/>
</dbReference>
<dbReference type="GeneID" id="93386659"/>
<dbReference type="KEGG" id="nma:NMA0708"/>
<dbReference type="HOGENOM" id="CLU_008392_0_0_4"/>
<dbReference type="UniPathway" id="UPA00544"/>
<dbReference type="Proteomes" id="UP000000626">
    <property type="component" value="Chromosome"/>
</dbReference>
<dbReference type="GO" id="GO:0005737">
    <property type="term" value="C:cytoplasm"/>
    <property type="evidence" value="ECO:0007669"/>
    <property type="project" value="UniProtKB-SubCell"/>
</dbReference>
<dbReference type="GO" id="GO:0004563">
    <property type="term" value="F:beta-N-acetylhexosaminidase activity"/>
    <property type="evidence" value="ECO:0007669"/>
    <property type="project" value="UniProtKB-UniRule"/>
</dbReference>
<dbReference type="GO" id="GO:0005975">
    <property type="term" value="P:carbohydrate metabolic process"/>
    <property type="evidence" value="ECO:0007669"/>
    <property type="project" value="InterPro"/>
</dbReference>
<dbReference type="GO" id="GO:0051301">
    <property type="term" value="P:cell division"/>
    <property type="evidence" value="ECO:0007669"/>
    <property type="project" value="UniProtKB-KW"/>
</dbReference>
<dbReference type="GO" id="GO:0071555">
    <property type="term" value="P:cell wall organization"/>
    <property type="evidence" value="ECO:0007669"/>
    <property type="project" value="UniProtKB-KW"/>
</dbReference>
<dbReference type="GO" id="GO:0009252">
    <property type="term" value="P:peptidoglycan biosynthetic process"/>
    <property type="evidence" value="ECO:0007669"/>
    <property type="project" value="UniProtKB-KW"/>
</dbReference>
<dbReference type="GO" id="GO:0009254">
    <property type="term" value="P:peptidoglycan turnover"/>
    <property type="evidence" value="ECO:0007669"/>
    <property type="project" value="UniProtKB-UniRule"/>
</dbReference>
<dbReference type="GO" id="GO:0008360">
    <property type="term" value="P:regulation of cell shape"/>
    <property type="evidence" value="ECO:0007669"/>
    <property type="project" value="UniProtKB-KW"/>
</dbReference>
<dbReference type="FunFam" id="3.20.20.300:FF:000001">
    <property type="entry name" value="Beta-hexosaminidase"/>
    <property type="match status" value="1"/>
</dbReference>
<dbReference type="Gene3D" id="3.20.20.300">
    <property type="entry name" value="Glycoside hydrolase, family 3, N-terminal domain"/>
    <property type="match status" value="1"/>
</dbReference>
<dbReference type="HAMAP" id="MF_00364">
    <property type="entry name" value="NagZ"/>
    <property type="match status" value="1"/>
</dbReference>
<dbReference type="InterPro" id="IPR022956">
    <property type="entry name" value="Beta_hexosaminidase_bac"/>
</dbReference>
<dbReference type="InterPro" id="IPR019800">
    <property type="entry name" value="Glyco_hydro_3_AS"/>
</dbReference>
<dbReference type="InterPro" id="IPR001764">
    <property type="entry name" value="Glyco_hydro_3_N"/>
</dbReference>
<dbReference type="InterPro" id="IPR036962">
    <property type="entry name" value="Glyco_hydro_3_N_sf"/>
</dbReference>
<dbReference type="InterPro" id="IPR017853">
    <property type="entry name" value="Glycoside_hydrolase_SF"/>
</dbReference>
<dbReference type="InterPro" id="IPR050226">
    <property type="entry name" value="NagZ_Beta-hexosaminidase"/>
</dbReference>
<dbReference type="NCBIfam" id="NF003740">
    <property type="entry name" value="PRK05337.1"/>
    <property type="match status" value="1"/>
</dbReference>
<dbReference type="PANTHER" id="PTHR30480:SF13">
    <property type="entry name" value="BETA-HEXOSAMINIDASE"/>
    <property type="match status" value="1"/>
</dbReference>
<dbReference type="PANTHER" id="PTHR30480">
    <property type="entry name" value="BETA-HEXOSAMINIDASE-RELATED"/>
    <property type="match status" value="1"/>
</dbReference>
<dbReference type="Pfam" id="PF00933">
    <property type="entry name" value="Glyco_hydro_3"/>
    <property type="match status" value="1"/>
</dbReference>
<dbReference type="SUPFAM" id="SSF51445">
    <property type="entry name" value="(Trans)glycosidases"/>
    <property type="match status" value="1"/>
</dbReference>
<dbReference type="PROSITE" id="PS00775">
    <property type="entry name" value="GLYCOSYL_HYDROL_F3"/>
    <property type="match status" value="1"/>
</dbReference>
<reference key="1">
    <citation type="journal article" date="2000" name="Nature">
        <title>Complete DNA sequence of a serogroup A strain of Neisseria meningitidis Z2491.</title>
        <authorList>
            <person name="Parkhill J."/>
            <person name="Achtman M."/>
            <person name="James K.D."/>
            <person name="Bentley S.D."/>
            <person name="Churcher C.M."/>
            <person name="Klee S.R."/>
            <person name="Morelli G."/>
            <person name="Basham D."/>
            <person name="Brown D."/>
            <person name="Chillingworth T."/>
            <person name="Davies R.M."/>
            <person name="Davis P."/>
            <person name="Devlin K."/>
            <person name="Feltwell T."/>
            <person name="Hamlin N."/>
            <person name="Holroyd S."/>
            <person name="Jagels K."/>
            <person name="Leather S."/>
            <person name="Moule S."/>
            <person name="Mungall K.L."/>
            <person name="Quail M.A."/>
            <person name="Rajandream M.A."/>
            <person name="Rutherford K.M."/>
            <person name="Simmonds M."/>
            <person name="Skelton J."/>
            <person name="Whitehead S."/>
            <person name="Spratt B.G."/>
            <person name="Barrell B.G."/>
        </authorList>
    </citation>
    <scope>NUCLEOTIDE SEQUENCE [LARGE SCALE GENOMIC DNA]</scope>
    <source>
        <strain>DSM 15465 / Z2491</strain>
    </source>
</reference>
<feature type="chain" id="PRO_0000210790" description="Beta-hexosaminidase">
    <location>
        <begin position="1"/>
        <end position="361"/>
    </location>
</feature>
<feature type="active site" description="Proton donor/acceptor" evidence="1">
    <location>
        <position position="187"/>
    </location>
</feature>
<feature type="active site" description="Nucleophile" evidence="1">
    <location>
        <position position="258"/>
    </location>
</feature>
<feature type="binding site" evidence="1">
    <location>
        <position position="69"/>
    </location>
    <ligand>
        <name>substrate</name>
    </ligand>
</feature>
<feature type="binding site" evidence="1">
    <location>
        <position position="77"/>
    </location>
    <ligand>
        <name>substrate</name>
    </ligand>
</feature>
<feature type="binding site" evidence="1">
    <location>
        <position position="144"/>
    </location>
    <ligand>
        <name>substrate</name>
    </ligand>
</feature>
<feature type="binding site" evidence="1">
    <location>
        <begin position="174"/>
        <end position="175"/>
    </location>
    <ligand>
        <name>substrate</name>
    </ligand>
</feature>
<feature type="site" description="Important for catalytic activity" evidence="1">
    <location>
        <position position="185"/>
    </location>
</feature>
<keyword id="KW-0131">Cell cycle</keyword>
<keyword id="KW-0132">Cell division</keyword>
<keyword id="KW-0133">Cell shape</keyword>
<keyword id="KW-0961">Cell wall biogenesis/degradation</keyword>
<keyword id="KW-0963">Cytoplasm</keyword>
<keyword id="KW-0326">Glycosidase</keyword>
<keyword id="KW-0378">Hydrolase</keyword>
<keyword id="KW-0573">Peptidoglycan synthesis</keyword>
<proteinExistence type="inferred from homology"/>
<evidence type="ECO:0000255" key="1">
    <source>
        <dbReference type="HAMAP-Rule" id="MF_00364"/>
    </source>
</evidence>